<organism evidence="2">
    <name type="scientific">High plains virus (isolate Utah 96)</name>
    <dbReference type="NCBI Taxonomy" id="247485"/>
    <lineage>
        <taxon>Viruses</taxon>
        <taxon>Riboviria</taxon>
        <taxon>dsRNA viruses</taxon>
        <taxon>High Plains virus</taxon>
    </lineage>
</organism>
<keyword id="KW-0007">Acetylation</keyword>
<keyword id="KW-0167">Capsid protein</keyword>
<keyword id="KW-0903">Direct protein sequencing</keyword>
<keyword id="KW-0946">Virion</keyword>
<reference evidence="2" key="1">
    <citation type="journal article" date="2004" name="Plant Dis.">
        <title>Biological and molecular variability among high plains virus isolates.</title>
        <authorList>
            <person name="Seifers D.L."/>
            <person name="She Y.-M."/>
            <person name="Harvey T.L."/>
            <person name="Martin T.J."/>
            <person name="Haber S."/>
            <person name="Ens W."/>
            <person name="Standing K.G."/>
            <person name="Louie R."/>
            <person name="Gordon D.T."/>
        </authorList>
        <dbReference type="AGRICOLA" id="IND43708726"/>
    </citation>
    <scope>PROTEIN SEQUENCE OF 2-289</scope>
    <scope>ACETYLATION AT ALA-2</scope>
    <scope>VARIANTS 54-SER--ASP-56 DELINS THR-SER-GLU; ASN-205; ASP-205; LEU-235; THR-235; ALA-244; 271-ASP--SER-273 DELINS ASN-SER-THR AND 286-ILE-ASP-287 DELINS THR</scope>
</reference>
<name>CAPSD_HPVUT</name>
<dbReference type="SMR" id="P83665"/>
<dbReference type="GO" id="GO:0019028">
    <property type="term" value="C:viral capsid"/>
    <property type="evidence" value="ECO:0007669"/>
    <property type="project" value="UniProtKB-KW"/>
</dbReference>
<accession>P83665</accession>
<feature type="initiator methionine" description="Removed" evidence="1">
    <location>
        <position position="1"/>
    </location>
</feature>
<feature type="chain" id="PRO_0000222951" description="Capsid protein">
    <location>
        <begin position="2"/>
        <end position="289"/>
    </location>
</feature>
<feature type="modified residue" description="N-acetylalanine; by host" evidence="1">
    <location>
        <position position="2"/>
    </location>
</feature>
<feature type="sequence variant">
    <original>SSD</original>
    <variation>TSE</variation>
    <location>
        <begin position="54"/>
        <end position="56"/>
    </location>
</feature>
<feature type="sequence variant" evidence="1">
    <original>E</original>
    <variation>D</variation>
    <location>
        <position position="205"/>
    </location>
</feature>
<feature type="sequence variant" evidence="1">
    <original>E</original>
    <variation>N</variation>
    <location>
        <position position="205"/>
    </location>
</feature>
<feature type="sequence variant" evidence="1">
    <original>I</original>
    <variation>L</variation>
    <location>
        <position position="235"/>
    </location>
</feature>
<feature type="sequence variant" evidence="1">
    <original>I</original>
    <variation>T</variation>
    <location>
        <position position="235"/>
    </location>
</feature>
<feature type="sequence variant" evidence="1">
    <original>V</original>
    <variation>A</variation>
    <location>
        <position position="244"/>
    </location>
</feature>
<feature type="sequence variant">
    <original>DSS</original>
    <variation>NST</variation>
    <location>
        <begin position="271"/>
        <end position="273"/>
    </location>
</feature>
<feature type="sequence variant" evidence="1">
    <original>ID</original>
    <variation>T</variation>
    <location>
        <begin position="286"/>
        <end position="287"/>
    </location>
</feature>
<protein>
    <recommendedName>
        <fullName>Capsid protein</fullName>
    </recommendedName>
    <alternativeName>
        <fullName>Coat protein</fullName>
    </alternativeName>
</protein>
<evidence type="ECO:0000269" key="1">
    <source ref="1"/>
</evidence>
<evidence type="ECO:0000305" key="2"/>
<comment type="subcellular location">
    <subcellularLocation>
        <location evidence="2">Virion</location>
    </subcellularLocation>
</comment>
<comment type="similarity">
    <text evidence="2">Belongs to the high plain virus capsid family.</text>
</comment>
<proteinExistence type="evidence at protein level"/>
<organismHost>
    <name type="scientific">Hordeum vulgare</name>
    <name type="common">Barley</name>
    <dbReference type="NCBI Taxonomy" id="4513"/>
</organismHost>
<organismHost>
    <name type="scientific">Triticum aestivum</name>
    <name type="common">Wheat</name>
    <dbReference type="NCBI Taxonomy" id="4565"/>
</organismHost>
<organismHost>
    <name type="scientific">Zea mays</name>
    <name type="common">Maize</name>
    <dbReference type="NCBI Taxonomy" id="4577"/>
</organismHost>
<sequence>MALSFKNSSGVLKAKTLKDGFVTSSDIETTVHDFSYEKPDLSSVDGFSLKSLLSSDGWHIVVAYQSVTNSERLNNNKKNNKTQRFKLFTFDIIVIPGLKPNKSKNVVSYNRFMALCIGMICYHKKWKVFNWSNKRYEDNKNTINFNEDDDFMNKLAMSAGFSKEHKYHWFYSTGFEYTFDIFPAEVIAMSLFRWSHRVELKIKYEHESDLVAPMVRQVTKRGNISDVMDIVGKDIIAKKYEEIVKDRSSIGIGTKYNDILDEFKDIFNKIDSSSLDSTIKNCFNKIDGE</sequence>